<evidence type="ECO:0000255" key="1">
    <source>
        <dbReference type="HAMAP-Rule" id="MF_00057"/>
    </source>
</evidence>
<name>KDSB_CHLPB</name>
<feature type="chain" id="PRO_0000370045" description="3-deoxy-manno-octulosonate cytidylyltransferase">
    <location>
        <begin position="1"/>
        <end position="248"/>
    </location>
</feature>
<organism>
    <name type="scientific">Chlorobium phaeobacteroides (strain BS1)</name>
    <dbReference type="NCBI Taxonomy" id="331678"/>
    <lineage>
        <taxon>Bacteria</taxon>
        <taxon>Pseudomonadati</taxon>
        <taxon>Chlorobiota</taxon>
        <taxon>Chlorobiia</taxon>
        <taxon>Chlorobiales</taxon>
        <taxon>Chlorobiaceae</taxon>
        <taxon>Chlorobium/Pelodictyon group</taxon>
        <taxon>Chlorobium</taxon>
    </lineage>
</organism>
<protein>
    <recommendedName>
        <fullName evidence="1">3-deoxy-manno-octulosonate cytidylyltransferase</fullName>
        <ecNumber evidence="1">2.7.7.38</ecNumber>
    </recommendedName>
    <alternativeName>
        <fullName evidence="1">CMP-2-keto-3-deoxyoctulosonic acid synthase</fullName>
        <shortName evidence="1">CKS</shortName>
        <shortName evidence="1">CMP-KDO synthase</shortName>
    </alternativeName>
</protein>
<proteinExistence type="inferred from homology"/>
<sequence>MEIVIVIPARLDSTRLQRKMLADIEGEPLIVRTCQNAMRAECTDRVVVATDSPEIAEVLRKVHVEVVMTSRHARCGSERIAEAAESLEGDLFINLQGDEPLIDPATIDLVAAPYLRGERPDCTTLVFPVPAAETALIDDPHIVKAVIDSNGYALYFSRSPIPCRRGANLSTTFYRHIGIYAFQREVLQKFAGLEPSMLEKEESLEQLRLLENGFRIQCVETTVDSPGVNTPEELEFVRRIFREDLPSL</sequence>
<keyword id="KW-0963">Cytoplasm</keyword>
<keyword id="KW-0448">Lipopolysaccharide biosynthesis</keyword>
<keyword id="KW-0548">Nucleotidyltransferase</keyword>
<keyword id="KW-0808">Transferase</keyword>
<dbReference type="EC" id="2.7.7.38" evidence="1"/>
<dbReference type="EMBL" id="CP001101">
    <property type="protein sequence ID" value="ACE04975.1"/>
    <property type="molecule type" value="Genomic_DNA"/>
</dbReference>
<dbReference type="SMR" id="B3EMY6"/>
<dbReference type="STRING" id="331678.Cphamn1_2065"/>
<dbReference type="KEGG" id="cpb:Cphamn1_2065"/>
<dbReference type="eggNOG" id="COG1212">
    <property type="taxonomic scope" value="Bacteria"/>
</dbReference>
<dbReference type="HOGENOM" id="CLU_065038_0_1_10"/>
<dbReference type="OrthoDB" id="9815559at2"/>
<dbReference type="UniPathway" id="UPA00030"/>
<dbReference type="UniPathway" id="UPA00358">
    <property type="reaction ID" value="UER00476"/>
</dbReference>
<dbReference type="GO" id="GO:0005829">
    <property type="term" value="C:cytosol"/>
    <property type="evidence" value="ECO:0007669"/>
    <property type="project" value="TreeGrafter"/>
</dbReference>
<dbReference type="GO" id="GO:0008690">
    <property type="term" value="F:3-deoxy-manno-octulosonate cytidylyltransferase activity"/>
    <property type="evidence" value="ECO:0007669"/>
    <property type="project" value="UniProtKB-UniRule"/>
</dbReference>
<dbReference type="GO" id="GO:0033468">
    <property type="term" value="P:CMP-keto-3-deoxy-D-manno-octulosonic acid biosynthetic process"/>
    <property type="evidence" value="ECO:0007669"/>
    <property type="project" value="UniProtKB-UniRule"/>
</dbReference>
<dbReference type="GO" id="GO:0009103">
    <property type="term" value="P:lipopolysaccharide biosynthetic process"/>
    <property type="evidence" value="ECO:0007669"/>
    <property type="project" value="UniProtKB-UniRule"/>
</dbReference>
<dbReference type="CDD" id="cd02517">
    <property type="entry name" value="CMP-KDO-Synthetase"/>
    <property type="match status" value="1"/>
</dbReference>
<dbReference type="Gene3D" id="3.90.550.10">
    <property type="entry name" value="Spore Coat Polysaccharide Biosynthesis Protein SpsA, Chain A"/>
    <property type="match status" value="1"/>
</dbReference>
<dbReference type="HAMAP" id="MF_00057">
    <property type="entry name" value="KdsB"/>
    <property type="match status" value="1"/>
</dbReference>
<dbReference type="InterPro" id="IPR003329">
    <property type="entry name" value="Cytidylyl_trans"/>
</dbReference>
<dbReference type="InterPro" id="IPR004528">
    <property type="entry name" value="KdsB"/>
</dbReference>
<dbReference type="InterPro" id="IPR029044">
    <property type="entry name" value="Nucleotide-diphossugar_trans"/>
</dbReference>
<dbReference type="NCBIfam" id="TIGR00466">
    <property type="entry name" value="kdsB"/>
    <property type="match status" value="1"/>
</dbReference>
<dbReference type="NCBIfam" id="NF003952">
    <property type="entry name" value="PRK05450.1-5"/>
    <property type="match status" value="1"/>
</dbReference>
<dbReference type="NCBIfam" id="NF009905">
    <property type="entry name" value="PRK13368.1"/>
    <property type="match status" value="1"/>
</dbReference>
<dbReference type="PANTHER" id="PTHR42866">
    <property type="entry name" value="3-DEOXY-MANNO-OCTULOSONATE CYTIDYLYLTRANSFERASE"/>
    <property type="match status" value="1"/>
</dbReference>
<dbReference type="PANTHER" id="PTHR42866:SF2">
    <property type="entry name" value="3-DEOXY-MANNO-OCTULOSONATE CYTIDYLYLTRANSFERASE, MITOCHONDRIAL"/>
    <property type="match status" value="1"/>
</dbReference>
<dbReference type="Pfam" id="PF02348">
    <property type="entry name" value="CTP_transf_3"/>
    <property type="match status" value="1"/>
</dbReference>
<dbReference type="SUPFAM" id="SSF53448">
    <property type="entry name" value="Nucleotide-diphospho-sugar transferases"/>
    <property type="match status" value="1"/>
</dbReference>
<accession>B3EMY6</accession>
<gene>
    <name evidence="1" type="primary">kdsB</name>
    <name type="ordered locus">Cphamn1_2065</name>
</gene>
<comment type="function">
    <text evidence="1">Activates KDO (a required 8-carbon sugar) for incorporation into bacterial lipopolysaccharide in Gram-negative bacteria.</text>
</comment>
<comment type="catalytic activity">
    <reaction evidence="1">
        <text>3-deoxy-alpha-D-manno-oct-2-ulosonate + CTP = CMP-3-deoxy-beta-D-manno-octulosonate + diphosphate</text>
        <dbReference type="Rhea" id="RHEA:23448"/>
        <dbReference type="ChEBI" id="CHEBI:33019"/>
        <dbReference type="ChEBI" id="CHEBI:37563"/>
        <dbReference type="ChEBI" id="CHEBI:85986"/>
        <dbReference type="ChEBI" id="CHEBI:85987"/>
        <dbReference type="EC" id="2.7.7.38"/>
    </reaction>
</comment>
<comment type="pathway">
    <text evidence="1">Nucleotide-sugar biosynthesis; CMP-3-deoxy-D-manno-octulosonate biosynthesis; CMP-3-deoxy-D-manno-octulosonate from 3-deoxy-D-manno-octulosonate and CTP: step 1/1.</text>
</comment>
<comment type="pathway">
    <text evidence="1">Bacterial outer membrane biogenesis; lipopolysaccharide biosynthesis.</text>
</comment>
<comment type="subcellular location">
    <subcellularLocation>
        <location evidence="1">Cytoplasm</location>
    </subcellularLocation>
</comment>
<comment type="similarity">
    <text evidence="1">Belongs to the KdsB family.</text>
</comment>
<reference key="1">
    <citation type="submission" date="2008-06" db="EMBL/GenBank/DDBJ databases">
        <title>Complete sequence of Chlorobium phaeobacteroides BS1.</title>
        <authorList>
            <consortium name="US DOE Joint Genome Institute"/>
            <person name="Lucas S."/>
            <person name="Copeland A."/>
            <person name="Lapidus A."/>
            <person name="Glavina del Rio T."/>
            <person name="Dalin E."/>
            <person name="Tice H."/>
            <person name="Bruce D."/>
            <person name="Goodwin L."/>
            <person name="Pitluck S."/>
            <person name="Schmutz J."/>
            <person name="Larimer F."/>
            <person name="Land M."/>
            <person name="Hauser L."/>
            <person name="Kyrpides N."/>
            <person name="Ovchinnikova G."/>
            <person name="Li T."/>
            <person name="Liu Z."/>
            <person name="Zhao F."/>
            <person name="Overmann J."/>
            <person name="Bryant D.A."/>
            <person name="Richardson P."/>
        </authorList>
    </citation>
    <scope>NUCLEOTIDE SEQUENCE [LARGE SCALE GENOMIC DNA]</scope>
    <source>
        <strain>BS1</strain>
    </source>
</reference>